<organism>
    <name type="scientific">Oryza sativa subsp. japonica</name>
    <name type="common">Rice</name>
    <dbReference type="NCBI Taxonomy" id="39947"/>
    <lineage>
        <taxon>Eukaryota</taxon>
        <taxon>Viridiplantae</taxon>
        <taxon>Streptophyta</taxon>
        <taxon>Embryophyta</taxon>
        <taxon>Tracheophyta</taxon>
        <taxon>Spermatophyta</taxon>
        <taxon>Magnoliopsida</taxon>
        <taxon>Liliopsida</taxon>
        <taxon>Poales</taxon>
        <taxon>Poaceae</taxon>
        <taxon>BOP clade</taxon>
        <taxon>Oryzoideae</taxon>
        <taxon>Oryzeae</taxon>
        <taxon>Oryzinae</taxon>
        <taxon>Oryza</taxon>
        <taxon>Oryza sativa</taxon>
    </lineage>
</organism>
<feature type="chain" id="PRO_0000363319" description="Probable protein phosphatase 2C 72">
    <location>
        <begin position="1"/>
        <end position="393"/>
    </location>
</feature>
<feature type="transmembrane region" description="Helical" evidence="2">
    <location>
        <begin position="147"/>
        <end position="167"/>
    </location>
</feature>
<feature type="domain" description="PPM-type phosphatase" evidence="3">
    <location>
        <begin position="49"/>
        <end position="357"/>
    </location>
</feature>
<feature type="binding site" evidence="1">
    <location>
        <position position="88"/>
    </location>
    <ligand>
        <name>Mn(2+)</name>
        <dbReference type="ChEBI" id="CHEBI:29035"/>
        <label>1</label>
    </ligand>
</feature>
<feature type="binding site" evidence="1">
    <location>
        <position position="88"/>
    </location>
    <ligand>
        <name>Mn(2+)</name>
        <dbReference type="ChEBI" id="CHEBI:29035"/>
        <label>2</label>
    </ligand>
</feature>
<feature type="binding site" evidence="1">
    <location>
        <position position="89"/>
    </location>
    <ligand>
        <name>Mn(2+)</name>
        <dbReference type="ChEBI" id="CHEBI:29035"/>
        <label>1</label>
    </ligand>
</feature>
<feature type="binding site" evidence="1">
    <location>
        <position position="289"/>
    </location>
    <ligand>
        <name>Mn(2+)</name>
        <dbReference type="ChEBI" id="CHEBI:29035"/>
        <label>2</label>
    </ligand>
</feature>
<feature type="binding site" evidence="1">
    <location>
        <position position="348"/>
    </location>
    <ligand>
        <name>Mn(2+)</name>
        <dbReference type="ChEBI" id="CHEBI:29035"/>
        <label>2</label>
    </ligand>
</feature>
<feature type="splice variant" id="VSP_036281" description="In isoform 2." evidence="4">
    <original>GIARRLVKAAMQQAAKKREMRYSD</original>
    <variation>VCVLILCKLIISMAKCLFILLLVQ</variation>
    <location>
        <begin position="311"/>
        <end position="334"/>
    </location>
</feature>
<feature type="splice variant" id="VSP_036282" description="In isoform 2." evidence="4">
    <location>
        <begin position="335"/>
        <end position="393"/>
    </location>
</feature>
<dbReference type="EC" id="3.1.3.16"/>
<dbReference type="EMBL" id="AC025783">
    <property type="protein sequence ID" value="AAK20060.1"/>
    <property type="status" value="ALT_INIT"/>
    <property type="molecule type" value="Genomic_DNA"/>
</dbReference>
<dbReference type="EMBL" id="DP000086">
    <property type="protein sequence ID" value="AAP54876.1"/>
    <property type="molecule type" value="Genomic_DNA"/>
</dbReference>
<dbReference type="EMBL" id="AP008216">
    <property type="protein sequence ID" value="BAF27117.1"/>
    <property type="molecule type" value="Genomic_DNA"/>
</dbReference>
<dbReference type="EMBL" id="AP014966">
    <property type="protein sequence ID" value="BAT11893.1"/>
    <property type="molecule type" value="Genomic_DNA"/>
</dbReference>
<dbReference type="EMBL" id="CM000145">
    <property type="protein sequence ID" value="EEE69065.1"/>
    <property type="molecule type" value="Genomic_DNA"/>
</dbReference>
<dbReference type="EMBL" id="AK119635">
    <property type="protein sequence ID" value="BAG99722.1"/>
    <property type="molecule type" value="mRNA"/>
</dbReference>
<dbReference type="RefSeq" id="XP_015614210.1">
    <property type="nucleotide sequence ID" value="XM_015758724.1"/>
</dbReference>
<dbReference type="SMR" id="Q7XCJ7"/>
<dbReference type="FunCoup" id="Q7XCJ7">
    <property type="interactions" value="1135"/>
</dbReference>
<dbReference type="STRING" id="39947.Q7XCJ7"/>
<dbReference type="PaxDb" id="39947-Q7XCJ7"/>
<dbReference type="EnsemblPlants" id="Os10t0544900-01">
    <molecule id="Q7XCJ7-1"/>
    <property type="protein sequence ID" value="Os10t0544900-01"/>
    <property type="gene ID" value="Os10g0544900"/>
</dbReference>
<dbReference type="Gramene" id="Os10t0544900-01">
    <molecule id="Q7XCJ7-1"/>
    <property type="protein sequence ID" value="Os10t0544900-01"/>
    <property type="gene ID" value="Os10g0544900"/>
</dbReference>
<dbReference type="KEGG" id="dosa:Os10g0544900"/>
<dbReference type="eggNOG" id="KOG0700">
    <property type="taxonomic scope" value="Eukaryota"/>
</dbReference>
<dbReference type="HOGENOM" id="CLU_013173_2_0_1"/>
<dbReference type="InParanoid" id="Q7XCJ7"/>
<dbReference type="OMA" id="INHHLFL"/>
<dbReference type="OrthoDB" id="420076at2759"/>
<dbReference type="Proteomes" id="UP000000763">
    <property type="component" value="Chromosome 10"/>
</dbReference>
<dbReference type="Proteomes" id="UP000007752">
    <property type="component" value="Chromosome 8"/>
</dbReference>
<dbReference type="Proteomes" id="UP000059680">
    <property type="component" value="Chromosome 10"/>
</dbReference>
<dbReference type="GO" id="GO:0016020">
    <property type="term" value="C:membrane"/>
    <property type="evidence" value="ECO:0007669"/>
    <property type="project" value="UniProtKB-SubCell"/>
</dbReference>
<dbReference type="GO" id="GO:0046872">
    <property type="term" value="F:metal ion binding"/>
    <property type="evidence" value="ECO:0007669"/>
    <property type="project" value="UniProtKB-KW"/>
</dbReference>
<dbReference type="GO" id="GO:0004722">
    <property type="term" value="F:protein serine/threonine phosphatase activity"/>
    <property type="evidence" value="ECO:0000318"/>
    <property type="project" value="GO_Central"/>
</dbReference>
<dbReference type="GO" id="GO:1902531">
    <property type="term" value="P:regulation of intracellular signal transduction"/>
    <property type="evidence" value="ECO:0000318"/>
    <property type="project" value="GO_Central"/>
</dbReference>
<dbReference type="CDD" id="cd00143">
    <property type="entry name" value="PP2Cc"/>
    <property type="match status" value="1"/>
</dbReference>
<dbReference type="FunFam" id="3.60.40.10:FF:000008">
    <property type="entry name" value="Phosphatase 2C family protein"/>
    <property type="match status" value="1"/>
</dbReference>
<dbReference type="Gene3D" id="3.60.40.10">
    <property type="entry name" value="PPM-type phosphatase domain"/>
    <property type="match status" value="1"/>
</dbReference>
<dbReference type="InterPro" id="IPR015655">
    <property type="entry name" value="PP2C"/>
</dbReference>
<dbReference type="InterPro" id="IPR000222">
    <property type="entry name" value="PP2C_BS"/>
</dbReference>
<dbReference type="InterPro" id="IPR036457">
    <property type="entry name" value="PPM-type-like_dom_sf"/>
</dbReference>
<dbReference type="InterPro" id="IPR001932">
    <property type="entry name" value="PPM-type_phosphatase-like_dom"/>
</dbReference>
<dbReference type="PANTHER" id="PTHR47992">
    <property type="entry name" value="PROTEIN PHOSPHATASE"/>
    <property type="match status" value="1"/>
</dbReference>
<dbReference type="Pfam" id="PF00481">
    <property type="entry name" value="PP2C"/>
    <property type="match status" value="1"/>
</dbReference>
<dbReference type="SMART" id="SM00332">
    <property type="entry name" value="PP2Cc"/>
    <property type="match status" value="1"/>
</dbReference>
<dbReference type="SUPFAM" id="SSF81606">
    <property type="entry name" value="PP2C-like"/>
    <property type="match status" value="1"/>
</dbReference>
<dbReference type="PROSITE" id="PS01032">
    <property type="entry name" value="PPM_1"/>
    <property type="match status" value="1"/>
</dbReference>
<dbReference type="PROSITE" id="PS51746">
    <property type="entry name" value="PPM_2"/>
    <property type="match status" value="1"/>
</dbReference>
<evidence type="ECO:0000250" key="1"/>
<evidence type="ECO:0000255" key="2"/>
<evidence type="ECO:0000255" key="3">
    <source>
        <dbReference type="PROSITE-ProRule" id="PRU01082"/>
    </source>
</evidence>
<evidence type="ECO:0000305" key="4"/>
<evidence type="ECO:0000312" key="5">
    <source>
        <dbReference type="EMBL" id="EEE69065.1"/>
    </source>
</evidence>
<reference key="1">
    <citation type="journal article" date="2003" name="Science">
        <title>In-depth view of structure, activity, and evolution of rice chromosome 10.</title>
        <authorList>
            <person name="Yu Y."/>
            <person name="Rambo T."/>
            <person name="Currie J."/>
            <person name="Saski C."/>
            <person name="Kim H.-R."/>
            <person name="Collura K."/>
            <person name="Thompson S."/>
            <person name="Simmons J."/>
            <person name="Yang T.-J."/>
            <person name="Nah G."/>
            <person name="Patel A.J."/>
            <person name="Thurmond S."/>
            <person name="Henry D."/>
            <person name="Oates R."/>
            <person name="Palmer M."/>
            <person name="Pries G."/>
            <person name="Gibson J."/>
            <person name="Anderson H."/>
            <person name="Paradkar M."/>
            <person name="Crane L."/>
            <person name="Dale J."/>
            <person name="Carver M.B."/>
            <person name="Wood T."/>
            <person name="Frisch D."/>
            <person name="Engler F."/>
            <person name="Soderlund C."/>
            <person name="Palmer L.E."/>
            <person name="Teytelman L."/>
            <person name="Nascimento L."/>
            <person name="De la Bastide M."/>
            <person name="Spiegel L."/>
            <person name="Ware D."/>
            <person name="O'Shaughnessy A."/>
            <person name="Dike S."/>
            <person name="Dedhia N."/>
            <person name="Preston R."/>
            <person name="Huang E."/>
            <person name="Ferraro K."/>
            <person name="Kuit K."/>
            <person name="Miller B."/>
            <person name="Zutavern T."/>
            <person name="Katzenberger F."/>
            <person name="Muller S."/>
            <person name="Balija V."/>
            <person name="Martienssen R.A."/>
            <person name="Stein L."/>
            <person name="Minx P."/>
            <person name="Johnson D."/>
            <person name="Cordum H."/>
            <person name="Mardis E."/>
            <person name="Cheng Z."/>
            <person name="Jiang J."/>
            <person name="Wilson R."/>
            <person name="McCombie W.R."/>
            <person name="Wing R.A."/>
            <person name="Yuan Q."/>
            <person name="Ouyang S."/>
            <person name="Liu J."/>
            <person name="Jones K.M."/>
            <person name="Gansberger K."/>
            <person name="Moffat K."/>
            <person name="Hill J."/>
            <person name="Tsitrin T."/>
            <person name="Overton L."/>
            <person name="Bera J."/>
            <person name="Kim M."/>
            <person name="Jin S."/>
            <person name="Tallon L."/>
            <person name="Ciecko A."/>
            <person name="Pai G."/>
            <person name="Van Aken S."/>
            <person name="Utterback T."/>
            <person name="Reidmuller S."/>
            <person name="Bormann J."/>
            <person name="Feldblyum T."/>
            <person name="Hsiao J."/>
            <person name="Zismann V."/>
            <person name="Blunt S."/>
            <person name="de Vazeille A.R."/>
            <person name="Shaffer T."/>
            <person name="Koo H."/>
            <person name="Suh B."/>
            <person name="Yang Q."/>
            <person name="Haas B."/>
            <person name="Peterson J."/>
            <person name="Pertea M."/>
            <person name="Volfovsky N."/>
            <person name="Wortman J."/>
            <person name="White O."/>
            <person name="Salzberg S.L."/>
            <person name="Fraser C.M."/>
            <person name="Buell C.R."/>
            <person name="Messing J."/>
            <person name="Song R."/>
            <person name="Fuks G."/>
            <person name="Llaca V."/>
            <person name="Kovchak S."/>
            <person name="Young S."/>
            <person name="Bowers J.E."/>
            <person name="Paterson A.H."/>
            <person name="Johns M.A."/>
            <person name="Mao L."/>
            <person name="Pan H."/>
            <person name="Dean R.A."/>
        </authorList>
    </citation>
    <scope>NUCLEOTIDE SEQUENCE [LARGE SCALE GENOMIC DNA]</scope>
    <source>
        <strain>cv. Nipponbare</strain>
    </source>
</reference>
<reference key="2">
    <citation type="journal article" date="2005" name="Nature">
        <title>The map-based sequence of the rice genome.</title>
        <authorList>
            <consortium name="International rice genome sequencing project (IRGSP)"/>
        </authorList>
    </citation>
    <scope>NUCLEOTIDE SEQUENCE [LARGE SCALE GENOMIC DNA]</scope>
    <source>
        <strain>cv. Nipponbare</strain>
    </source>
</reference>
<reference key="3">
    <citation type="journal article" date="2008" name="Nucleic Acids Res.">
        <title>The rice annotation project database (RAP-DB): 2008 update.</title>
        <authorList>
            <consortium name="The rice annotation project (RAP)"/>
        </authorList>
    </citation>
    <scope>GENOME REANNOTATION</scope>
    <source>
        <strain>cv. Nipponbare</strain>
    </source>
</reference>
<reference key="4">
    <citation type="journal article" date="2013" name="Rice">
        <title>Improvement of the Oryza sativa Nipponbare reference genome using next generation sequence and optical map data.</title>
        <authorList>
            <person name="Kawahara Y."/>
            <person name="de la Bastide M."/>
            <person name="Hamilton J.P."/>
            <person name="Kanamori H."/>
            <person name="McCombie W.R."/>
            <person name="Ouyang S."/>
            <person name="Schwartz D.C."/>
            <person name="Tanaka T."/>
            <person name="Wu J."/>
            <person name="Zhou S."/>
            <person name="Childs K.L."/>
            <person name="Davidson R.M."/>
            <person name="Lin H."/>
            <person name="Quesada-Ocampo L."/>
            <person name="Vaillancourt B."/>
            <person name="Sakai H."/>
            <person name="Lee S.S."/>
            <person name="Kim J."/>
            <person name="Numa H."/>
            <person name="Itoh T."/>
            <person name="Buell C.R."/>
            <person name="Matsumoto T."/>
        </authorList>
    </citation>
    <scope>GENOME REANNOTATION</scope>
    <source>
        <strain>cv. Nipponbare</strain>
    </source>
</reference>
<reference key="5">
    <citation type="journal article" date="2005" name="PLoS Biol.">
        <title>The genomes of Oryza sativa: a history of duplications.</title>
        <authorList>
            <person name="Yu J."/>
            <person name="Wang J."/>
            <person name="Lin W."/>
            <person name="Li S."/>
            <person name="Li H."/>
            <person name="Zhou J."/>
            <person name="Ni P."/>
            <person name="Dong W."/>
            <person name="Hu S."/>
            <person name="Zeng C."/>
            <person name="Zhang J."/>
            <person name="Zhang Y."/>
            <person name="Li R."/>
            <person name="Xu Z."/>
            <person name="Li S."/>
            <person name="Li X."/>
            <person name="Zheng H."/>
            <person name="Cong L."/>
            <person name="Lin L."/>
            <person name="Yin J."/>
            <person name="Geng J."/>
            <person name="Li G."/>
            <person name="Shi J."/>
            <person name="Liu J."/>
            <person name="Lv H."/>
            <person name="Li J."/>
            <person name="Wang J."/>
            <person name="Deng Y."/>
            <person name="Ran L."/>
            <person name="Shi X."/>
            <person name="Wang X."/>
            <person name="Wu Q."/>
            <person name="Li C."/>
            <person name="Ren X."/>
            <person name="Wang J."/>
            <person name="Wang X."/>
            <person name="Li D."/>
            <person name="Liu D."/>
            <person name="Zhang X."/>
            <person name="Ji Z."/>
            <person name="Zhao W."/>
            <person name="Sun Y."/>
            <person name="Zhang Z."/>
            <person name="Bao J."/>
            <person name="Han Y."/>
            <person name="Dong L."/>
            <person name="Ji J."/>
            <person name="Chen P."/>
            <person name="Wu S."/>
            <person name="Liu J."/>
            <person name="Xiao Y."/>
            <person name="Bu D."/>
            <person name="Tan J."/>
            <person name="Yang L."/>
            <person name="Ye C."/>
            <person name="Zhang J."/>
            <person name="Xu J."/>
            <person name="Zhou Y."/>
            <person name="Yu Y."/>
            <person name="Zhang B."/>
            <person name="Zhuang S."/>
            <person name="Wei H."/>
            <person name="Liu B."/>
            <person name="Lei M."/>
            <person name="Yu H."/>
            <person name="Li Y."/>
            <person name="Xu H."/>
            <person name="Wei S."/>
            <person name="He X."/>
            <person name="Fang L."/>
            <person name="Zhang Z."/>
            <person name="Zhang Y."/>
            <person name="Huang X."/>
            <person name="Su Z."/>
            <person name="Tong W."/>
            <person name="Li J."/>
            <person name="Tong Z."/>
            <person name="Li S."/>
            <person name="Ye J."/>
            <person name="Wang L."/>
            <person name="Fang L."/>
            <person name="Lei T."/>
            <person name="Chen C.-S."/>
            <person name="Chen H.-C."/>
            <person name="Xu Z."/>
            <person name="Li H."/>
            <person name="Huang H."/>
            <person name="Zhang F."/>
            <person name="Xu H."/>
            <person name="Li N."/>
            <person name="Zhao C."/>
            <person name="Li S."/>
            <person name="Dong L."/>
            <person name="Huang Y."/>
            <person name="Li L."/>
            <person name="Xi Y."/>
            <person name="Qi Q."/>
            <person name="Li W."/>
            <person name="Zhang B."/>
            <person name="Hu W."/>
            <person name="Zhang Y."/>
            <person name="Tian X."/>
            <person name="Jiao Y."/>
            <person name="Liang X."/>
            <person name="Jin J."/>
            <person name="Gao L."/>
            <person name="Zheng W."/>
            <person name="Hao B."/>
            <person name="Liu S.-M."/>
            <person name="Wang W."/>
            <person name="Yuan L."/>
            <person name="Cao M."/>
            <person name="McDermott J."/>
            <person name="Samudrala R."/>
            <person name="Wang J."/>
            <person name="Wong G.K.-S."/>
            <person name="Yang H."/>
        </authorList>
    </citation>
    <scope>NUCLEOTIDE SEQUENCE [LARGE SCALE GENOMIC DNA]</scope>
    <source>
        <strain>cv. Nipponbare</strain>
    </source>
</reference>
<reference key="6">
    <citation type="journal article" date="2003" name="Science">
        <title>Collection, mapping, and annotation of over 28,000 cDNA clones from japonica rice.</title>
        <authorList>
            <consortium name="The rice full-length cDNA consortium"/>
        </authorList>
    </citation>
    <scope>NUCLEOTIDE SEQUENCE [LARGE SCALE MRNA] (ISOFORM 1)</scope>
    <source>
        <strain>cv. Nipponbare</strain>
    </source>
</reference>
<reference key="7">
    <citation type="journal article" date="2008" name="BMC Genomics">
        <title>Genome-wide and expression analysis of protein phosphatase 2C in rice and Arabidopsis.</title>
        <authorList>
            <person name="Xue T."/>
            <person name="Wang D."/>
            <person name="Zhang S."/>
            <person name="Ehlting J."/>
            <person name="Ni F."/>
            <person name="Jacab S."/>
            <person name="Zheng C."/>
            <person name="Zhong Y."/>
        </authorList>
    </citation>
    <scope>GENE FAMILY</scope>
    <scope>NOMENCLATURE</scope>
</reference>
<accession>Q7XCJ7</accession>
<accession>B9G1Z8</accession>
<accession>Q9AV42</accession>
<comment type="catalytic activity">
    <reaction>
        <text>O-phospho-L-seryl-[protein] + H2O = L-seryl-[protein] + phosphate</text>
        <dbReference type="Rhea" id="RHEA:20629"/>
        <dbReference type="Rhea" id="RHEA-COMP:9863"/>
        <dbReference type="Rhea" id="RHEA-COMP:11604"/>
        <dbReference type="ChEBI" id="CHEBI:15377"/>
        <dbReference type="ChEBI" id="CHEBI:29999"/>
        <dbReference type="ChEBI" id="CHEBI:43474"/>
        <dbReference type="ChEBI" id="CHEBI:83421"/>
        <dbReference type="EC" id="3.1.3.16"/>
    </reaction>
</comment>
<comment type="catalytic activity">
    <reaction>
        <text>O-phospho-L-threonyl-[protein] + H2O = L-threonyl-[protein] + phosphate</text>
        <dbReference type="Rhea" id="RHEA:47004"/>
        <dbReference type="Rhea" id="RHEA-COMP:11060"/>
        <dbReference type="Rhea" id="RHEA-COMP:11605"/>
        <dbReference type="ChEBI" id="CHEBI:15377"/>
        <dbReference type="ChEBI" id="CHEBI:30013"/>
        <dbReference type="ChEBI" id="CHEBI:43474"/>
        <dbReference type="ChEBI" id="CHEBI:61977"/>
        <dbReference type="EC" id="3.1.3.16"/>
    </reaction>
</comment>
<comment type="cofactor">
    <cofactor evidence="1">
        <name>Mg(2+)</name>
        <dbReference type="ChEBI" id="CHEBI:18420"/>
    </cofactor>
    <cofactor evidence="1">
        <name>Mn(2+)</name>
        <dbReference type="ChEBI" id="CHEBI:29035"/>
    </cofactor>
    <text evidence="1">Binds 2 magnesium or manganese ions per subunit.</text>
</comment>
<comment type="subcellular location">
    <subcellularLocation>
        <location evidence="4">Membrane</location>
        <topology evidence="4">Single-pass membrane protein</topology>
    </subcellularLocation>
</comment>
<comment type="alternative products">
    <event type="alternative splicing"/>
    <isoform>
        <id>Q7XCJ7-1</id>
        <name>1</name>
        <sequence type="displayed"/>
    </isoform>
    <isoform>
        <id>Q7XCJ7-2</id>
        <name>2</name>
        <sequence type="described" ref="VSP_036281 VSP_036282"/>
    </isoform>
</comment>
<comment type="similarity">
    <text evidence="4">Belongs to the PP2C family.</text>
</comment>
<comment type="sequence caution" evidence="4">
    <conflict type="erroneous initiation">
        <sequence resource="EMBL-CDS" id="AAK20060"/>
    </conflict>
</comment>
<protein>
    <recommendedName>
        <fullName>Probable protein phosphatase 2C 72</fullName>
        <shortName>OsPP2C72</shortName>
        <ecNumber>3.1.3.16</ecNumber>
    </recommendedName>
</protein>
<sequence length="393" mass="43370">MLSAAMEYLRSCWGPASSPAGRPRKGSDAAGRQDGLLWYKDAGQLVAGEFSMAVVQANNLLEDHSQVESGPLSTTDPNLQGTLVGVYDGHGGPETARYINDHLFNHLRGFASEHKCMSADVIRKAFRATEEGFFSVVSSQWSMRPQLAAVGSCCLVGVICAGNLYIANLGDSRAVLGRLVKGTGEVLAMQLSAEHNASFEEVRRELQAAHPDDPHIVVLKHNVWRVKGIIQITRSIGDVYLKKPEFNREPLHSKFRLQETFRRPLLSSEPAIVVHQLQTTDQFIIFASDGLWEHISNQEAVDLVQHNPRNGIARRLVKAAMQQAAKKREMRYSDLKKIDRGVRRHFHDDITVVVVFFDSNAITTANWSRPSVSLRGGGVTLPANSLAPFSVPT</sequence>
<proteinExistence type="evidence at transcript level"/>
<name>P2C72_ORYSJ</name>
<gene>
    <name type="ordered locus">Os10g0544900</name>
    <name type="ordered locus">LOC_Os10g39780</name>
    <name type="ORF">OsJ_026955</name>
    <name evidence="5" type="ORF">OsJ_28079</name>
    <name type="ORF">OSJNBa0001O14.1</name>
</gene>
<keyword id="KW-0025">Alternative splicing</keyword>
<keyword id="KW-0378">Hydrolase</keyword>
<keyword id="KW-0460">Magnesium</keyword>
<keyword id="KW-0464">Manganese</keyword>
<keyword id="KW-0472">Membrane</keyword>
<keyword id="KW-0479">Metal-binding</keyword>
<keyword id="KW-0904">Protein phosphatase</keyword>
<keyword id="KW-1185">Reference proteome</keyword>
<keyword id="KW-0812">Transmembrane</keyword>
<keyword id="KW-1133">Transmembrane helix</keyword>